<accession>Q8TH04</accession>
<feature type="chain" id="PRO_0000136085" description="RNA-free ribonuclease P">
    <location>
        <begin position="1"/>
        <end position="199"/>
    </location>
</feature>
<reference key="1">
    <citation type="journal article" date="1999" name="Genetics">
        <title>Divergence of the hyperthermophilic archaea Pyrococcus furiosus and P. horikoshii inferred from complete genomic sequences.</title>
        <authorList>
            <person name="Maeder D.L."/>
            <person name="Weiss R.B."/>
            <person name="Dunn D.M."/>
            <person name="Cherry J.L."/>
            <person name="Gonzalez J.M."/>
            <person name="DiRuggiero J."/>
            <person name="Robb F.T."/>
        </authorList>
    </citation>
    <scope>NUCLEOTIDE SEQUENCE [LARGE SCALE GENOMIC DNA]</scope>
    <source>
        <strain>ATCC 43587 / DSM 3638 / JCM 8422 / Vc1</strain>
    </source>
</reference>
<dbReference type="EC" id="3.1.26.5" evidence="1"/>
<dbReference type="EMBL" id="AE009950">
    <property type="protein sequence ID" value="AAL82004.1"/>
    <property type="molecule type" value="Genomic_DNA"/>
</dbReference>
<dbReference type="RefSeq" id="WP_011013019.1">
    <property type="nucleotide sequence ID" value="NZ_CP023154.1"/>
</dbReference>
<dbReference type="SMR" id="Q8TH04"/>
<dbReference type="STRING" id="186497.PF1880"/>
<dbReference type="PaxDb" id="186497-PF1880"/>
<dbReference type="KEGG" id="pfu:PF1880"/>
<dbReference type="PATRIC" id="fig|186497.12.peg.1951"/>
<dbReference type="eggNOG" id="arCOG00720">
    <property type="taxonomic scope" value="Archaea"/>
</dbReference>
<dbReference type="HOGENOM" id="CLU_109672_0_0_2"/>
<dbReference type="OrthoDB" id="95197at2157"/>
<dbReference type="PhylomeDB" id="Q8TH04"/>
<dbReference type="Proteomes" id="UP000001013">
    <property type="component" value="Chromosome"/>
</dbReference>
<dbReference type="GO" id="GO:0004526">
    <property type="term" value="F:ribonuclease P activity"/>
    <property type="evidence" value="ECO:0007669"/>
    <property type="project" value="UniProtKB-UniRule"/>
</dbReference>
<dbReference type="GO" id="GO:0001682">
    <property type="term" value="P:tRNA 5'-leader removal"/>
    <property type="evidence" value="ECO:0007669"/>
    <property type="project" value="UniProtKB-UniRule"/>
</dbReference>
<dbReference type="CDD" id="cd18691">
    <property type="entry name" value="PIN_VapC-like"/>
    <property type="match status" value="1"/>
</dbReference>
<dbReference type="HAMAP" id="MF_01078">
    <property type="entry name" value="RNA_free_RNase_P"/>
    <property type="match status" value="1"/>
</dbReference>
<dbReference type="InterPro" id="IPR029060">
    <property type="entry name" value="PIN-like_dom_sf"/>
</dbReference>
<dbReference type="InterPro" id="IPR014856">
    <property type="entry name" value="RNA_free_RNase_P"/>
</dbReference>
<dbReference type="NCBIfam" id="NF003342">
    <property type="entry name" value="PRK04358.1-3"/>
    <property type="match status" value="1"/>
</dbReference>
<dbReference type="NCBIfam" id="TIGR03875">
    <property type="entry name" value="RNA_lig_partner"/>
    <property type="match status" value="1"/>
</dbReference>
<dbReference type="PANTHER" id="PTHR41173:SF1">
    <property type="entry name" value="RNA-FREE RIBONUCLEASE P"/>
    <property type="match status" value="1"/>
</dbReference>
<dbReference type="PANTHER" id="PTHR41173">
    <property type="entry name" value="UPF0278 PROTEIN TK1425"/>
    <property type="match status" value="1"/>
</dbReference>
<dbReference type="Pfam" id="PF08745">
    <property type="entry name" value="PIN_5"/>
    <property type="match status" value="1"/>
</dbReference>
<dbReference type="SUPFAM" id="SSF88723">
    <property type="entry name" value="PIN domain-like"/>
    <property type="match status" value="1"/>
</dbReference>
<comment type="function">
    <text evidence="1">RNA-free RNase P that catalyzes the removal of the 5'-leader sequence from pre-tRNA to produce the mature 5'-terminus.</text>
</comment>
<comment type="catalytic activity">
    <reaction evidence="1">
        <text>Endonucleolytic cleavage of RNA, removing 5'-extranucleotides from tRNA precursor.</text>
        <dbReference type="EC" id="3.1.26.5"/>
    </reaction>
</comment>
<comment type="similarity">
    <text evidence="1">Belongs to the HARP family.</text>
</comment>
<organism>
    <name type="scientific">Pyrococcus furiosus (strain ATCC 43587 / DSM 3638 / JCM 8422 / Vc1)</name>
    <dbReference type="NCBI Taxonomy" id="186497"/>
    <lineage>
        <taxon>Archaea</taxon>
        <taxon>Methanobacteriati</taxon>
        <taxon>Methanobacteriota</taxon>
        <taxon>Thermococci</taxon>
        <taxon>Thermococcales</taxon>
        <taxon>Thermococcaceae</taxon>
        <taxon>Pyrococcus</taxon>
    </lineage>
</organism>
<keyword id="KW-0255">Endonuclease</keyword>
<keyword id="KW-0378">Hydrolase</keyword>
<keyword id="KW-0540">Nuclease</keyword>
<keyword id="KW-1185">Reference proteome</keyword>
<keyword id="KW-0819">tRNA processing</keyword>
<protein>
    <recommendedName>
        <fullName evidence="1">RNA-free ribonuclease P</fullName>
        <shortName evidence="1">RNA-free RNase P</shortName>
        <ecNumber evidence="1">3.1.26.5</ecNumber>
    </recommendedName>
    <alternativeName>
        <fullName evidence="1">Protein-only RNase P</fullName>
    </alternativeName>
</protein>
<name>RFRNP_PYRFU</name>
<sequence length="199" mass="23266">MIRFILDTSIFVNPDVRKKFGNTPTEAMKTFLKYAEKLFGKVEFYMPPGIYKEVKNFLEDIPPEMELYIIKKPPNVHDIKIPAFVVYELIEDIRRRVDKGLRVAEKAVRESVIDTNNVDKIIQKLRRNYRKALREGIVDSTEDFELILLAKEIDGIIVSADVGILTWAEKMGIKWVDAFKFKELLDELVEKVESEKERK</sequence>
<proteinExistence type="inferred from homology"/>
<evidence type="ECO:0000255" key="1">
    <source>
        <dbReference type="HAMAP-Rule" id="MF_01078"/>
    </source>
</evidence>
<gene>
    <name type="ordered locus">PF1880</name>
</gene>